<keyword id="KW-0007">Acetylation</keyword>
<keyword id="KW-0903">Direct protein sequencing</keyword>
<keyword id="KW-0275">Fatty acid biosynthesis</keyword>
<keyword id="KW-0276">Fatty acid metabolism</keyword>
<keyword id="KW-0444">Lipid biosynthesis</keyword>
<keyword id="KW-0443">Lipid metabolism</keyword>
<keyword id="KW-0521">NADP</keyword>
<keyword id="KW-0560">Oxidoreductase</keyword>
<keyword id="KW-0576">Peroxisome</keyword>
<keyword id="KW-0597">Phosphoprotein</keyword>
<keyword id="KW-1185">Reference proteome</keyword>
<feature type="initiator methionine" description="Removed" evidence="2">
    <location>
        <position position="1"/>
    </location>
</feature>
<feature type="chain" id="PRO_0000054739" description="Peroxisomal trans-2-enoyl-CoA reductase">
    <location>
        <begin position="2"/>
        <end position="302"/>
    </location>
</feature>
<feature type="short sequence motif" description="Microbody targeting signal" evidence="1">
    <location>
        <begin position="300"/>
        <end position="302"/>
    </location>
</feature>
<feature type="active site" description="Proton acceptor" evidence="1">
    <location>
        <position position="178"/>
    </location>
</feature>
<feature type="binding site" evidence="1">
    <location>
        <begin position="23"/>
        <end position="47"/>
    </location>
    <ligand>
        <name>NADP(+)</name>
        <dbReference type="ChEBI" id="CHEBI:58349"/>
    </ligand>
</feature>
<feature type="modified residue" description="N-acetylglycine" evidence="2">
    <location>
        <position position="2"/>
    </location>
</feature>
<feature type="modified residue" description="N6-succinyllysine" evidence="2">
    <location>
        <position position="32"/>
    </location>
</feature>
<feature type="modified residue" description="Phosphoserine" evidence="3">
    <location>
        <position position="49"/>
    </location>
</feature>
<feature type="modified residue" description="N6-acetyllysine" evidence="2">
    <location>
        <position position="83"/>
    </location>
</feature>
<feature type="modified residue" description="Phosphotyrosine" evidence="3">
    <location>
        <position position="178"/>
    </location>
</feature>
<evidence type="ECO:0000250" key="1"/>
<evidence type="ECO:0000250" key="2">
    <source>
        <dbReference type="UniProtKB" id="Q99MZ7"/>
    </source>
</evidence>
<evidence type="ECO:0000250" key="3">
    <source>
        <dbReference type="UniProtKB" id="Q9BY49"/>
    </source>
</evidence>
<evidence type="ECO:0000269" key="4">
    <source>
    </source>
</evidence>
<evidence type="ECO:0000305" key="5"/>
<evidence type="ECO:0000305" key="6">
    <source>
    </source>
</evidence>
<organism>
    <name type="scientific">Cavia porcellus</name>
    <name type="common">Guinea pig</name>
    <dbReference type="NCBI Taxonomy" id="10141"/>
    <lineage>
        <taxon>Eukaryota</taxon>
        <taxon>Metazoa</taxon>
        <taxon>Chordata</taxon>
        <taxon>Craniata</taxon>
        <taxon>Vertebrata</taxon>
        <taxon>Euteleostomi</taxon>
        <taxon>Mammalia</taxon>
        <taxon>Eutheria</taxon>
        <taxon>Euarchontoglires</taxon>
        <taxon>Glires</taxon>
        <taxon>Rodentia</taxon>
        <taxon>Hystricomorpha</taxon>
        <taxon>Caviidae</taxon>
        <taxon>Cavia</taxon>
    </lineage>
</organism>
<protein>
    <recommendedName>
        <fullName evidence="5">Peroxisomal trans-2-enoyl-CoA reductase</fullName>
        <ecNumber evidence="4">1.3.1.38</ecNumber>
    </recommendedName>
</protein>
<dbReference type="EC" id="1.3.1.38" evidence="4"/>
<dbReference type="EMBL" id="AF232010">
    <property type="protein sequence ID" value="AAF69799.1"/>
    <property type="molecule type" value="mRNA"/>
</dbReference>
<dbReference type="RefSeq" id="XP_003462124.1">
    <property type="nucleotide sequence ID" value="XM_003462076.3"/>
</dbReference>
<dbReference type="SMR" id="Q9JIF5"/>
<dbReference type="FunCoup" id="Q9JIF5">
    <property type="interactions" value="583"/>
</dbReference>
<dbReference type="STRING" id="10141.ENSCPOP00000010538"/>
<dbReference type="SwissLipids" id="SLP:000001093"/>
<dbReference type="Ensembl" id="ENSCPOT00000011831.3">
    <property type="protein sequence ID" value="ENSCPOP00000010538.2"/>
    <property type="gene ID" value="ENSCPOG00000011717.4"/>
</dbReference>
<dbReference type="GeneID" id="100725791"/>
<dbReference type="KEGG" id="cpoc:100725791"/>
<dbReference type="CTD" id="55825"/>
<dbReference type="VEuPathDB" id="HostDB:ENSCPOG00000011717"/>
<dbReference type="eggNOG" id="KOG0725">
    <property type="taxonomic scope" value="Eukaryota"/>
</dbReference>
<dbReference type="GeneTree" id="ENSGT00940000156882"/>
<dbReference type="HOGENOM" id="CLU_010194_1_2_1"/>
<dbReference type="InParanoid" id="Q9JIF5"/>
<dbReference type="OMA" id="GYRICIN"/>
<dbReference type="OrthoDB" id="417891at2759"/>
<dbReference type="TreeFam" id="TF315256"/>
<dbReference type="BRENDA" id="1.3.1.38">
    <property type="organism ID" value="1225"/>
</dbReference>
<dbReference type="SABIO-RK" id="Q9JIF5"/>
<dbReference type="UniPathway" id="UPA00094"/>
<dbReference type="Proteomes" id="UP000005447">
    <property type="component" value="Unassembled WGS sequence"/>
</dbReference>
<dbReference type="Bgee" id="ENSCPOG00000011717">
    <property type="expression patterns" value="Expressed in liver and 13 other cell types or tissues"/>
</dbReference>
<dbReference type="GO" id="GO:0043231">
    <property type="term" value="C:intracellular membrane-bounded organelle"/>
    <property type="evidence" value="ECO:0000314"/>
    <property type="project" value="UniProtKB"/>
</dbReference>
<dbReference type="GO" id="GO:0005739">
    <property type="term" value="C:mitochondrion"/>
    <property type="evidence" value="ECO:0000250"/>
    <property type="project" value="UniProtKB"/>
</dbReference>
<dbReference type="GO" id="GO:0005778">
    <property type="term" value="C:peroxisomal membrane"/>
    <property type="evidence" value="ECO:0000314"/>
    <property type="project" value="UniProtKB"/>
</dbReference>
<dbReference type="GO" id="GO:0005102">
    <property type="term" value="F:signaling receptor binding"/>
    <property type="evidence" value="ECO:0007669"/>
    <property type="project" value="Ensembl"/>
</dbReference>
<dbReference type="GO" id="GO:0019166">
    <property type="term" value="F:trans-2-enoyl-CoA reductase (NADPH) activity"/>
    <property type="evidence" value="ECO:0000314"/>
    <property type="project" value="UniProtKB"/>
</dbReference>
<dbReference type="GO" id="GO:0006633">
    <property type="term" value="P:fatty acid biosynthetic process"/>
    <property type="evidence" value="ECO:0007669"/>
    <property type="project" value="UniProtKB-UniPathway"/>
</dbReference>
<dbReference type="GO" id="GO:0033306">
    <property type="term" value="P:phytol metabolic process"/>
    <property type="evidence" value="ECO:0007669"/>
    <property type="project" value="Ensembl"/>
</dbReference>
<dbReference type="CDD" id="cd05369">
    <property type="entry name" value="TER_DECR_SDR_a"/>
    <property type="match status" value="1"/>
</dbReference>
<dbReference type="FunFam" id="3.40.50.720:FF:000335">
    <property type="entry name" value="Peroxisomal trans-2-enoyl-CoA reductase"/>
    <property type="match status" value="1"/>
</dbReference>
<dbReference type="Gene3D" id="3.40.50.720">
    <property type="entry name" value="NAD(P)-binding Rossmann-like Domain"/>
    <property type="match status" value="1"/>
</dbReference>
<dbReference type="InterPro" id="IPR036291">
    <property type="entry name" value="NAD(P)-bd_dom_sf"/>
</dbReference>
<dbReference type="InterPro" id="IPR052388">
    <property type="entry name" value="Peroxisomal_t2-enoyl-CoA_red"/>
</dbReference>
<dbReference type="InterPro" id="IPR002347">
    <property type="entry name" value="SDR_fam"/>
</dbReference>
<dbReference type="PANTHER" id="PTHR24317">
    <property type="entry name" value="PEROXISOMAL TRANS-2-ENOYL-COA REDUCTASE"/>
    <property type="match status" value="1"/>
</dbReference>
<dbReference type="PANTHER" id="PTHR24317:SF7">
    <property type="entry name" value="PEROXISOMAL TRANS-2-ENOYL-COA REDUCTASE"/>
    <property type="match status" value="1"/>
</dbReference>
<dbReference type="Pfam" id="PF13561">
    <property type="entry name" value="adh_short_C2"/>
    <property type="match status" value="1"/>
</dbReference>
<dbReference type="PRINTS" id="PR00081">
    <property type="entry name" value="GDHRDH"/>
</dbReference>
<dbReference type="SUPFAM" id="SSF51735">
    <property type="entry name" value="NAD(P)-binding Rossmann-fold domains"/>
    <property type="match status" value="1"/>
</dbReference>
<sequence length="302" mass="32529">MGSWTKCQSCLAPGLLQNRAAIVTGGGTGIGKAIAKELLHLGCNVVIASRKFDRLRAAAEELKATLPPSNKAEVTPIQCNIRKEEEVNNLMKSTLALYGKIDFLVNNGGGQFWSSPEHISSKGWHAVIETNLTGTFYMCKAAYNSWMKEHGGAIVNIIILLNGQPFVAHSGAARGGVYNLTKSLALGWARSGIRINCVAPGTVYSQTAMDNYGDMGKTLFADAFQKIPAKRLGVPEEVSSLVCFLLSPAASFITGQLVNVDGGQSLYCQNHDIPDHDNWPEGVGDLSTVKKMKESFKQKAKL</sequence>
<reference key="1">
    <citation type="journal article" date="2000" name="J. Biol. Chem.">
        <title>Molecular cloning and expression of mammalian peroxisomal trans-2-enoyl-coenzyme A reductase cDNAs.</title>
        <authorList>
            <person name="Das A.K."/>
            <person name="Uhler M.D."/>
            <person name="Hajra A.K."/>
        </authorList>
    </citation>
    <scope>NUCLEOTIDE SEQUENCE [MRNA]</scope>
    <scope>PROTEIN SEQUENCE OF 92-118</scope>
    <scope>ENZYME ACTIVITY</scope>
    <scope>BIOPHYSICOCHEMICAL PROPERTIES</scope>
    <scope>SUBCELLULAR LOCATION</scope>
    <scope>TISSUE SPECIFICITY</scope>
    <scope>CATALYTIC ACTIVITY</scope>
    <source>
        <tissue>Liver</tissue>
    </source>
</reference>
<comment type="function">
    <text evidence="4">Participates in chain elongation of fatty acids. Catalyzes the reduction of trans-2-enoyl-CoAs of varying chain lengths from 6:1 to 16:1, having maximum activity with 10:1 CoA. Has no 2,4-dienoyl-CoA reductase activity.</text>
</comment>
<comment type="catalytic activity">
    <reaction evidence="4">
        <text>a (2E)-enoyl-CoA + NADPH + H(+) = a 2,3-saturated acyl-CoA + NADP(+)</text>
        <dbReference type="Rhea" id="RHEA:33763"/>
        <dbReference type="ChEBI" id="CHEBI:15378"/>
        <dbReference type="ChEBI" id="CHEBI:57783"/>
        <dbReference type="ChEBI" id="CHEBI:58349"/>
        <dbReference type="ChEBI" id="CHEBI:58856"/>
        <dbReference type="ChEBI" id="CHEBI:65111"/>
        <dbReference type="EC" id="1.3.1.38"/>
    </reaction>
    <physiologicalReaction direction="left-to-right" evidence="6">
        <dbReference type="Rhea" id="RHEA:33764"/>
    </physiologicalReaction>
</comment>
<comment type="catalytic activity">
    <reaction evidence="4">
        <text>(2E)-hexenoyl-CoA + NADPH + H(+) = hexanoyl-CoA + NADP(+)</text>
        <dbReference type="Rhea" id="RHEA:44956"/>
        <dbReference type="ChEBI" id="CHEBI:15378"/>
        <dbReference type="ChEBI" id="CHEBI:57783"/>
        <dbReference type="ChEBI" id="CHEBI:58349"/>
        <dbReference type="ChEBI" id="CHEBI:62077"/>
        <dbReference type="ChEBI" id="CHEBI:62620"/>
    </reaction>
    <physiologicalReaction direction="left-to-right" evidence="6">
        <dbReference type="Rhea" id="RHEA:44957"/>
    </physiologicalReaction>
</comment>
<comment type="catalytic activity">
    <reaction evidence="4">
        <text>(2E)-octenoyl-CoA + NADPH + H(+) = octanoyl-CoA + NADP(+)</text>
        <dbReference type="Rhea" id="RHEA:44952"/>
        <dbReference type="ChEBI" id="CHEBI:15378"/>
        <dbReference type="ChEBI" id="CHEBI:57386"/>
        <dbReference type="ChEBI" id="CHEBI:57783"/>
        <dbReference type="ChEBI" id="CHEBI:58349"/>
        <dbReference type="ChEBI" id="CHEBI:62242"/>
    </reaction>
    <physiologicalReaction direction="left-to-right" evidence="6">
        <dbReference type="Rhea" id="RHEA:44953"/>
    </physiologicalReaction>
</comment>
<comment type="catalytic activity">
    <reaction evidence="4">
        <text>(2E)-decenoyl-CoA + NADPH + H(+) = decanoyl-CoA + NADP(+)</text>
        <dbReference type="Rhea" id="RHEA:44960"/>
        <dbReference type="ChEBI" id="CHEBI:15378"/>
        <dbReference type="ChEBI" id="CHEBI:57783"/>
        <dbReference type="ChEBI" id="CHEBI:58349"/>
        <dbReference type="ChEBI" id="CHEBI:61406"/>
        <dbReference type="ChEBI" id="CHEBI:61430"/>
    </reaction>
    <physiologicalReaction direction="left-to-right" evidence="6">
        <dbReference type="Rhea" id="RHEA:44961"/>
    </physiologicalReaction>
</comment>
<comment type="catalytic activity">
    <reaction evidence="4">
        <text>(2E)-dodecenoyl-CoA + NADPH + H(+) = dodecanoyl-CoA + NADP(+)</text>
        <dbReference type="Rhea" id="RHEA:44964"/>
        <dbReference type="ChEBI" id="CHEBI:15378"/>
        <dbReference type="ChEBI" id="CHEBI:57330"/>
        <dbReference type="ChEBI" id="CHEBI:57375"/>
        <dbReference type="ChEBI" id="CHEBI:57783"/>
        <dbReference type="ChEBI" id="CHEBI:58349"/>
    </reaction>
    <physiologicalReaction direction="left-to-right" evidence="6">
        <dbReference type="Rhea" id="RHEA:44965"/>
    </physiologicalReaction>
</comment>
<comment type="catalytic activity">
    <reaction evidence="4">
        <text>(2E)-tetradecenoyl-CoA + NADPH + H(+) = tetradecanoyl-CoA + NADP(+)</text>
        <dbReference type="Rhea" id="RHEA:44968"/>
        <dbReference type="ChEBI" id="CHEBI:15378"/>
        <dbReference type="ChEBI" id="CHEBI:57385"/>
        <dbReference type="ChEBI" id="CHEBI:57783"/>
        <dbReference type="ChEBI" id="CHEBI:58349"/>
        <dbReference type="ChEBI" id="CHEBI:61405"/>
    </reaction>
    <physiologicalReaction direction="left-to-right" evidence="6">
        <dbReference type="Rhea" id="RHEA:44969"/>
    </physiologicalReaction>
</comment>
<comment type="biophysicochemical properties">
    <kinetics>
        <KM evidence="4">11 uM for decenoyl-CoA</KM>
        <KM evidence="4">53 uM for NADPH</KM>
    </kinetics>
</comment>
<comment type="pathway">
    <text evidence="4">Lipid metabolism; fatty acid biosynthesis.</text>
</comment>
<comment type="subunit">
    <text evidence="3">Interacts with PEX5, probably required to target it into peroxisomes.</text>
</comment>
<comment type="subcellular location">
    <subcellularLocation>
        <location evidence="4">Peroxisome</location>
    </subcellularLocation>
</comment>
<comment type="tissue specificity">
    <text evidence="4">Expressed in liver.</text>
</comment>
<comment type="similarity">
    <text evidence="5">Belongs to the short-chain dehydrogenases/reductases (SDR) family.</text>
</comment>
<gene>
    <name type="primary">PECR</name>
</gene>
<proteinExistence type="evidence at protein level"/>
<accession>Q9JIF5</accession>
<name>PECR_CAVPO</name>